<name>HDT3_MAIZE</name>
<gene>
    <name type="primary">HDT3</name>
    <name type="synonym">HD2C</name>
</gene>
<dbReference type="EMBL" id="AF254073">
    <property type="protein sequence ID" value="AAF68625.1"/>
    <property type="molecule type" value="mRNA"/>
</dbReference>
<dbReference type="SMR" id="Q9M4U4"/>
<dbReference type="STRING" id="4577.Q9M4U4"/>
<dbReference type="PaxDb" id="4577-GRMZM2G159032_P01"/>
<dbReference type="eggNOG" id="ENOG502QVH6">
    <property type="taxonomic scope" value="Eukaryota"/>
</dbReference>
<dbReference type="InParanoid" id="Q9M4U4"/>
<dbReference type="SABIO-RK" id="Q9M4U4"/>
<dbReference type="Proteomes" id="UP000007305">
    <property type="component" value="Unplaced"/>
</dbReference>
<dbReference type="ExpressionAtlas" id="Q9M4U4">
    <property type="expression patterns" value="baseline and differential"/>
</dbReference>
<dbReference type="GO" id="GO:0005730">
    <property type="term" value="C:nucleolus"/>
    <property type="evidence" value="ECO:0007669"/>
    <property type="project" value="UniProtKB-SubCell"/>
</dbReference>
<dbReference type="GO" id="GO:0016787">
    <property type="term" value="F:hydrolase activity"/>
    <property type="evidence" value="ECO:0007669"/>
    <property type="project" value="UniProtKB-KW"/>
</dbReference>
<dbReference type="GO" id="GO:0008270">
    <property type="term" value="F:zinc ion binding"/>
    <property type="evidence" value="ECO:0007669"/>
    <property type="project" value="UniProtKB-KW"/>
</dbReference>
<dbReference type="GO" id="GO:0006325">
    <property type="term" value="P:chromatin organization"/>
    <property type="evidence" value="ECO:0007669"/>
    <property type="project" value="UniProtKB-KW"/>
</dbReference>
<dbReference type="FunFam" id="2.60.120.340:FF:000004">
    <property type="entry name" value="Histone deacetylase HDT1"/>
    <property type="match status" value="1"/>
</dbReference>
<dbReference type="Gene3D" id="2.60.120.340">
    <property type="entry name" value="Nucleoplasmin core domain"/>
    <property type="match status" value="1"/>
</dbReference>
<dbReference type="InterPro" id="IPR041232">
    <property type="entry name" value="NPL"/>
</dbReference>
<dbReference type="InterPro" id="IPR013087">
    <property type="entry name" value="Znf_C2H2_type"/>
</dbReference>
<dbReference type="Pfam" id="PF17800">
    <property type="entry name" value="NPL"/>
    <property type="match status" value="1"/>
</dbReference>
<dbReference type="PROSITE" id="PS00028">
    <property type="entry name" value="ZINC_FINGER_C2H2_1"/>
    <property type="match status" value="1"/>
</dbReference>
<dbReference type="PROSITE" id="PS50157">
    <property type="entry name" value="ZINC_FINGER_C2H2_2"/>
    <property type="match status" value="1"/>
</dbReference>
<accession>Q9M4U4</accession>
<protein>
    <recommendedName>
        <fullName>Histone deacetylase HDT3</fullName>
    </recommendedName>
    <alternativeName>
        <fullName>Histone deacetylase 2c</fullName>
        <shortName>HD2c</shortName>
    </alternativeName>
    <alternativeName>
        <fullName>Zm-HD2c</fullName>
    </alternativeName>
</protein>
<keyword id="KW-0156">Chromatin regulator</keyword>
<keyword id="KW-0378">Hydrolase</keyword>
<keyword id="KW-0479">Metal-binding</keyword>
<keyword id="KW-0539">Nucleus</keyword>
<keyword id="KW-0597">Phosphoprotein</keyword>
<keyword id="KW-1185">Reference proteome</keyword>
<keyword id="KW-0678">Repressor</keyword>
<keyword id="KW-0804">Transcription</keyword>
<keyword id="KW-0805">Transcription regulation</keyword>
<keyword id="KW-0862">Zinc</keyword>
<keyword id="KW-0863">Zinc-finger</keyword>
<comment type="function">
    <text evidence="1">Mediates the deacetylation of lysine residues on the N-terminal part of the core histones (H2A, H2B, H3 and H4). Histone deacetylation gives a tag for epigenetic repression and plays an important role in transcriptional regulation, cell cycle progression and developmental events (By similarity).</text>
</comment>
<comment type="subunit">
    <text evidence="1">Multimer. Possibly forms a homotrimer with HDT1 and/or HDT2 (By similarity).</text>
</comment>
<comment type="subcellular location">
    <subcellularLocation>
        <location evidence="1">Nucleus</location>
        <location evidence="1">Nucleolus</location>
    </subcellularLocation>
</comment>
<comment type="similarity">
    <text evidence="4">Belongs to the histone deacetylase HD2 family.</text>
</comment>
<sequence length="300" mass="32457">MEFWGLEVKPGSTVKCEPGYGFVLHLSQAALGESKKSDNALMYVKIDDQKLAIGTLSVDKNPHIQFDLIFDKEFELSHTSKTTSVFFTGYKVEQPFEEDEMDLDSEDEDEELNVPAVKENGKADEKKQKSQEKAVAAPSKSSPDSKKSKDDDDSDEDETDDSDEDETDDSDEGLSPEEGDDDSSDEDDTSDDEEEDTPTPKKPEVGKKRAAESSVLKTPLSDKKAKVATPSSQKTGGKKGAAVHVATPHPAKGKTIVNNDKSVKSPKSAPKSGVPCKSCSKSFISETAPQAHSKAKHGGK</sequence>
<evidence type="ECO:0000250" key="1"/>
<evidence type="ECO:0000255" key="2">
    <source>
        <dbReference type="PROSITE-ProRule" id="PRU00042"/>
    </source>
</evidence>
<evidence type="ECO:0000256" key="3">
    <source>
        <dbReference type="SAM" id="MobiDB-lite"/>
    </source>
</evidence>
<evidence type="ECO:0000305" key="4"/>
<organism>
    <name type="scientific">Zea mays</name>
    <name type="common">Maize</name>
    <dbReference type="NCBI Taxonomy" id="4577"/>
    <lineage>
        <taxon>Eukaryota</taxon>
        <taxon>Viridiplantae</taxon>
        <taxon>Streptophyta</taxon>
        <taxon>Embryophyta</taxon>
        <taxon>Tracheophyta</taxon>
        <taxon>Spermatophyta</taxon>
        <taxon>Magnoliopsida</taxon>
        <taxon>Liliopsida</taxon>
        <taxon>Poales</taxon>
        <taxon>Poaceae</taxon>
        <taxon>PACMAD clade</taxon>
        <taxon>Panicoideae</taxon>
        <taxon>Andropogonodae</taxon>
        <taxon>Andropogoneae</taxon>
        <taxon>Tripsacinae</taxon>
        <taxon>Zea</taxon>
    </lineage>
</organism>
<reference key="1">
    <citation type="journal article" date="2001" name="Planta">
        <title>Comparative analysis of HD2 type histone deacetylases in higher plants.</title>
        <authorList>
            <person name="Dangl M."/>
            <person name="Brosch G."/>
            <person name="Haas H."/>
            <person name="Loidl P."/>
            <person name="Lusser A."/>
        </authorList>
    </citation>
    <scope>NUCLEOTIDE SEQUENCE [MRNA]</scope>
</reference>
<feature type="chain" id="PRO_0000195210" description="Histone deacetylase HDT3">
    <location>
        <begin position="1"/>
        <end position="300"/>
    </location>
</feature>
<feature type="zinc finger region" description="C2H2-type" evidence="2">
    <location>
        <begin position="274"/>
        <end position="297"/>
    </location>
</feature>
<feature type="region of interest" description="Disordered" evidence="3">
    <location>
        <begin position="98"/>
        <end position="300"/>
    </location>
</feature>
<feature type="compositionally biased region" description="Acidic residues" evidence="3">
    <location>
        <begin position="98"/>
        <end position="112"/>
    </location>
</feature>
<feature type="compositionally biased region" description="Basic and acidic residues" evidence="3">
    <location>
        <begin position="119"/>
        <end position="132"/>
    </location>
</feature>
<feature type="compositionally biased region" description="Acidic residues" evidence="3">
    <location>
        <begin position="151"/>
        <end position="197"/>
    </location>
</feature>
<feature type="compositionally biased region" description="Basic and acidic residues" evidence="3">
    <location>
        <begin position="198"/>
        <end position="211"/>
    </location>
</feature>
<feature type="compositionally biased region" description="Low complexity" evidence="3">
    <location>
        <begin position="265"/>
        <end position="275"/>
    </location>
</feature>
<feature type="compositionally biased region" description="Polar residues" evidence="3">
    <location>
        <begin position="279"/>
        <end position="290"/>
    </location>
</feature>
<proteinExistence type="evidence at transcript level"/>